<protein>
    <recommendedName>
        <fullName>Protein TrbE</fullName>
    </recommendedName>
</protein>
<geneLocation type="plasmid">
    <name>F</name>
</geneLocation>
<dbReference type="EMBL" id="X61575">
    <property type="protein sequence ID" value="CAA43776.1"/>
    <property type="molecule type" value="Genomic_DNA"/>
</dbReference>
<dbReference type="EMBL" id="U01159">
    <property type="protein sequence ID" value="AAC44207.1"/>
    <property type="molecule type" value="Genomic_DNA"/>
</dbReference>
<dbReference type="EMBL" id="AP001918">
    <property type="protein sequence ID" value="BAA97960.1"/>
    <property type="molecule type" value="Genomic_DNA"/>
</dbReference>
<dbReference type="PIR" id="S23992">
    <property type="entry name" value="S23992"/>
</dbReference>
<dbReference type="RefSeq" id="NP_061469.1">
    <property type="nucleotide sequence ID" value="NC_002483.1"/>
</dbReference>
<dbReference type="RefSeq" id="NP_862935.1">
    <property type="nucleotide sequence ID" value="NC_004998.1"/>
</dbReference>
<dbReference type="RefSeq" id="YP_001816536.1">
    <property type="nucleotide sequence ID" value="NC_010558.1"/>
</dbReference>
<dbReference type="RefSeq" id="YP_001965432.1">
    <property type="nucleotide sequence ID" value="NC_010862.1"/>
</dbReference>
<dbReference type="RefSeq" id="YP_009068334.1">
    <property type="nucleotide sequence ID" value="NC_025139.1"/>
</dbReference>
<dbReference type="RefSeq" id="YP_009070599.1">
    <property type="nucleotide sequence ID" value="NC_025175.1"/>
</dbReference>
<dbReference type="SMR" id="Q05807"/>
<dbReference type="PRO" id="PR:Q05807"/>
<dbReference type="GO" id="GO:0005886">
    <property type="term" value="C:plasma membrane"/>
    <property type="evidence" value="ECO:0007669"/>
    <property type="project" value="UniProtKB-SubCell"/>
</dbReference>
<dbReference type="InterPro" id="IPR020150">
    <property type="entry name" value="T4SS_TrbE"/>
</dbReference>
<dbReference type="NCBIfam" id="NF010271">
    <property type="entry name" value="PRK13718.1"/>
    <property type="match status" value="1"/>
</dbReference>
<dbReference type="Pfam" id="PF11100">
    <property type="entry name" value="TrbE"/>
    <property type="match status" value="1"/>
</dbReference>
<comment type="function">
    <text>Not determined yet. Not required for conjugation transfer in rich, aerobic growth media.</text>
</comment>
<comment type="subcellular location">
    <subcellularLocation>
        <location>Cell inner membrane</location>
        <topology>Multi-pass membrane protein</topology>
    </subcellularLocation>
</comment>
<gene>
    <name type="primary">trbE</name>
    <name type="ordered locus">ECOK12F090</name>
</gene>
<accession>Q05807</accession>
<name>TRBE_ECOLI</name>
<organism>
    <name type="scientific">Escherichia coli (strain K12)</name>
    <dbReference type="NCBI Taxonomy" id="83333"/>
    <lineage>
        <taxon>Bacteria</taxon>
        <taxon>Pseudomonadati</taxon>
        <taxon>Pseudomonadota</taxon>
        <taxon>Gammaproteobacteria</taxon>
        <taxon>Enterobacterales</taxon>
        <taxon>Enterobacteriaceae</taxon>
        <taxon>Escherichia</taxon>
    </lineage>
</organism>
<proteinExistence type="predicted"/>
<feature type="chain" id="PRO_0000068489" description="Protein TrbE">
    <location>
        <begin position="1"/>
        <end position="86"/>
    </location>
</feature>
<feature type="transmembrane region" description="Helical" evidence="1">
    <location>
        <begin position="11"/>
        <end position="31"/>
    </location>
</feature>
<feature type="transmembrane region" description="Helical" evidence="1">
    <location>
        <begin position="45"/>
        <end position="65"/>
    </location>
</feature>
<keyword id="KW-0997">Cell inner membrane</keyword>
<keyword id="KW-1003">Cell membrane</keyword>
<keyword id="KW-0472">Membrane</keyword>
<keyword id="KW-0614">Plasmid</keyword>
<keyword id="KW-0812">Transmembrane</keyword>
<keyword id="KW-1133">Transmembrane helix</keyword>
<reference key="1">
    <citation type="journal article" date="1992" name="J. Mol. Biol.">
        <title>Characterization of the F plasmid mating aggregation gene traN and of a new F transfer region locus trbE.</title>
        <authorList>
            <person name="Maneewannakul S."/>
            <person name="Kathir P."/>
            <person name="Ippen-Ihler K."/>
        </authorList>
    </citation>
    <scope>NUCLEOTIDE SEQUENCE [GENOMIC DNA]</scope>
    <source>
        <strain>K12</strain>
    </source>
</reference>
<reference key="2">
    <citation type="journal article" date="1994" name="Microbiol. Rev.">
        <title>Analysis of the sequence and gene products of the transfer region of the F sex factor.</title>
        <authorList>
            <person name="Frost L.S."/>
            <person name="Ippen-Ihler K."/>
            <person name="Skurray R.A."/>
        </authorList>
    </citation>
    <scope>NUCLEOTIDE SEQUENCE [GENOMIC DNA]</scope>
</reference>
<reference key="3">
    <citation type="submission" date="2000-04" db="EMBL/GenBank/DDBJ databases">
        <title>Complete nucleotide sequence of the F plasmid: its implications for organization and diversification of plasmid genomes.</title>
        <authorList>
            <person name="Shimizu H."/>
            <person name="Saitoh Y."/>
            <person name="Suda Y."/>
            <person name="Uehara K."/>
            <person name="Sampei G."/>
            <person name="Mizobuchi K."/>
        </authorList>
    </citation>
    <scope>NUCLEOTIDE SEQUENCE [LARGE SCALE GENOMIC DNA]</scope>
    <source>
        <strain>K12 / CR63</strain>
    </source>
</reference>
<evidence type="ECO:0000255" key="1"/>
<sequence>MMKVIFTSNRFIDFLIRLLITAIVISPVIIWSWDTVKETTADGMLAAAFVILYSGVLLFILYFCFSALTDLQKPDERKSDERNEDE</sequence>